<feature type="initiator methionine" description="Removed; by host" evidence="1">
    <location>
        <position position="1"/>
    </location>
</feature>
<feature type="chain" id="PRO_0000261258" description="Gag-Pol polyprotein">
    <location>
        <begin position="2"/>
        <end position="1430"/>
    </location>
</feature>
<feature type="chain" id="PRO_0000246476" description="Matrix protein p17" evidence="1">
    <location>
        <begin position="2"/>
        <end position="128"/>
    </location>
</feature>
<feature type="chain" id="PRO_0000246477" description="Capsid protein p24" evidence="1">
    <location>
        <begin position="129"/>
        <end position="359"/>
    </location>
</feature>
<feature type="peptide" id="PRO_0000246478" description="Spacer peptide 1" evidence="1">
    <location>
        <begin position="360"/>
        <end position="372"/>
    </location>
</feature>
<feature type="chain" id="PRO_0000246479" description="Nucleocapsid protein p7" evidence="1">
    <location>
        <begin position="373"/>
        <end position="427"/>
    </location>
</feature>
<feature type="peptide" id="PRO_0000246707" description="Transframe peptide" evidence="8">
    <location>
        <begin position="428"/>
        <end position="435"/>
    </location>
</feature>
<feature type="chain" id="PRO_0000246480" description="p6-pol" evidence="8">
    <location>
        <begin position="436"/>
        <end position="483"/>
    </location>
</feature>
<feature type="chain" id="PRO_0000246481" description="Protease" evidence="1">
    <location>
        <begin position="484"/>
        <end position="582"/>
    </location>
</feature>
<feature type="chain" id="PRO_0000246482" description="Reverse transcriptase/ribonuclease H" evidence="1">
    <location>
        <begin position="583"/>
        <end position="1142"/>
    </location>
</feature>
<feature type="chain" id="PRO_0000246483" description="p51 RT" evidence="1">
    <location>
        <begin position="583"/>
        <end position="1022"/>
    </location>
</feature>
<feature type="chain" id="PRO_0000246484" description="p15" evidence="1">
    <location>
        <begin position="1023"/>
        <end position="1142"/>
    </location>
</feature>
<feature type="chain" id="PRO_0000246485" description="Integrase" evidence="1">
    <location>
        <begin position="1143"/>
        <end position="1430"/>
    </location>
</feature>
<feature type="domain" description="Peptidase A2" evidence="10">
    <location>
        <begin position="503"/>
        <end position="572"/>
    </location>
</feature>
<feature type="domain" description="Reverse transcriptase" evidence="11">
    <location>
        <begin position="626"/>
        <end position="816"/>
    </location>
</feature>
<feature type="domain" description="RNase H type-1" evidence="12">
    <location>
        <begin position="1016"/>
        <end position="1139"/>
    </location>
</feature>
<feature type="domain" description="Integrase catalytic" evidence="14">
    <location>
        <begin position="1196"/>
        <end position="1346"/>
    </location>
</feature>
<feature type="zinc finger region" description="CCHC-type 1" evidence="9">
    <location>
        <begin position="385"/>
        <end position="402"/>
    </location>
</feature>
<feature type="zinc finger region" description="CCHC-type 2" evidence="9">
    <location>
        <begin position="406"/>
        <end position="423"/>
    </location>
</feature>
<feature type="zinc finger region" description="Integrase-type" evidence="13">
    <location>
        <begin position="1145"/>
        <end position="1186"/>
    </location>
</feature>
<feature type="DNA-binding region" description="Integrase-type" evidence="15">
    <location>
        <begin position="1365"/>
        <end position="1412"/>
    </location>
</feature>
<feature type="region of interest" description="Interaction with Gp41" evidence="7">
    <location>
        <begin position="7"/>
        <end position="31"/>
    </location>
</feature>
<feature type="region of interest" description="Interaction with host CALM1" evidence="5">
    <location>
        <begin position="8"/>
        <end position="43"/>
    </location>
</feature>
<feature type="region of interest" description="Interaction with host AP3D1" evidence="7">
    <location>
        <begin position="12"/>
        <end position="19"/>
    </location>
</feature>
<feature type="region of interest" description="Interaction with membrane phosphatidylinositol 4,5-bisphosphate and RNA" evidence="7">
    <location>
        <begin position="14"/>
        <end position="33"/>
    </location>
</feature>
<feature type="region of interest" description="Interaction with membrane phosphatidylinositol 4,5-bisphosphate" evidence="7">
    <location>
        <begin position="73"/>
        <end position="77"/>
    </location>
</feature>
<feature type="region of interest" description="Interaction with human PPIA/CYPA and NUP153" evidence="7">
    <location>
        <begin position="185"/>
        <end position="223"/>
    </location>
</feature>
<feature type="region of interest" description="Dimerization/Multimerization of capsid protein p24" evidence="5">
    <location>
        <begin position="273"/>
        <end position="359"/>
    </location>
</feature>
<feature type="region of interest" description="Disordered" evidence="17">
    <location>
        <begin position="439"/>
        <end position="480"/>
    </location>
</feature>
<feature type="region of interest" description="Dimerization of protease" evidence="5">
    <location>
        <begin position="484"/>
        <end position="488"/>
    </location>
</feature>
<feature type="region of interest" description="Dimerization of protease" evidence="5">
    <location>
        <begin position="532"/>
        <end position="538"/>
    </location>
</feature>
<feature type="region of interest" description="Dimerization of protease" evidence="5">
    <location>
        <begin position="571"/>
        <end position="583"/>
    </location>
</feature>
<feature type="region of interest" description="RT 'primer grip'" evidence="1">
    <location>
        <begin position="809"/>
        <end position="817"/>
    </location>
</feature>
<feature type="short sequence motif" description="Nuclear export signal" evidence="1">
    <location>
        <begin position="16"/>
        <end position="22"/>
    </location>
</feature>
<feature type="short sequence motif" description="Nuclear localization signal" evidence="1">
    <location>
        <begin position="26"/>
        <end position="32"/>
    </location>
</feature>
<feature type="short sequence motif" description="Tryptophan repeat motif" evidence="1">
    <location>
        <begin position="980"/>
        <end position="996"/>
    </location>
</feature>
<feature type="compositionally biased region" description="Polar residues" evidence="17">
    <location>
        <begin position="445"/>
        <end position="455"/>
    </location>
</feature>
<feature type="active site" description="For protease activity; shared with dimeric partner" evidence="16">
    <location>
        <position position="508"/>
    </location>
</feature>
<feature type="binding site" evidence="1">
    <location>
        <position position="692"/>
    </location>
    <ligand>
        <name>Mg(2+)</name>
        <dbReference type="ChEBI" id="CHEBI:18420"/>
        <label>1</label>
        <note>catalytic; for reverse transcriptase activity</note>
    </ligand>
</feature>
<feature type="binding site" evidence="1">
    <location>
        <position position="767"/>
    </location>
    <ligand>
        <name>Mg(2+)</name>
        <dbReference type="ChEBI" id="CHEBI:18420"/>
        <label>1</label>
        <note>catalytic; for reverse transcriptase activity</note>
    </ligand>
</feature>
<feature type="binding site" evidence="1">
    <location>
        <position position="768"/>
    </location>
    <ligand>
        <name>Mg(2+)</name>
        <dbReference type="ChEBI" id="CHEBI:18420"/>
        <label>1</label>
        <note>catalytic; for reverse transcriptase activity</note>
    </ligand>
</feature>
<feature type="binding site" evidence="1">
    <location>
        <position position="1025"/>
    </location>
    <ligand>
        <name>Mg(2+)</name>
        <dbReference type="ChEBI" id="CHEBI:18420"/>
        <label>2</label>
        <note>catalytic; for RNase H activity</note>
    </ligand>
</feature>
<feature type="binding site" evidence="1">
    <location>
        <position position="1060"/>
    </location>
    <ligand>
        <name>Mg(2+)</name>
        <dbReference type="ChEBI" id="CHEBI:18420"/>
        <label>2</label>
        <note>catalytic; for RNase H activity</note>
    </ligand>
</feature>
<feature type="binding site" evidence="1">
    <location>
        <position position="1080"/>
    </location>
    <ligand>
        <name>Mg(2+)</name>
        <dbReference type="ChEBI" id="CHEBI:18420"/>
        <label>2</label>
        <note>catalytic; for RNase H activity</note>
    </ligand>
</feature>
<feature type="binding site" evidence="1">
    <location>
        <position position="1131"/>
    </location>
    <ligand>
        <name>Mg(2+)</name>
        <dbReference type="ChEBI" id="CHEBI:18420"/>
        <label>2</label>
        <note>catalytic; for RNase H activity</note>
    </ligand>
</feature>
<feature type="binding site" evidence="13">
    <location>
        <position position="1154"/>
    </location>
    <ligand>
        <name>Zn(2+)</name>
        <dbReference type="ChEBI" id="CHEBI:29105"/>
    </ligand>
</feature>
<feature type="binding site" evidence="13">
    <location>
        <position position="1158"/>
    </location>
    <ligand>
        <name>Zn(2+)</name>
        <dbReference type="ChEBI" id="CHEBI:29105"/>
    </ligand>
</feature>
<feature type="binding site" evidence="13">
    <location>
        <position position="1182"/>
    </location>
    <ligand>
        <name>Zn(2+)</name>
        <dbReference type="ChEBI" id="CHEBI:29105"/>
    </ligand>
</feature>
<feature type="binding site" evidence="13">
    <location>
        <position position="1185"/>
    </location>
    <ligand>
        <name>Zn(2+)</name>
        <dbReference type="ChEBI" id="CHEBI:29105"/>
    </ligand>
</feature>
<feature type="binding site" evidence="1">
    <location>
        <position position="1206"/>
    </location>
    <ligand>
        <name>Mg(2+)</name>
        <dbReference type="ChEBI" id="CHEBI:18420"/>
        <label>3</label>
        <note>catalytic; for integrase activity</note>
    </ligand>
</feature>
<feature type="binding site" evidence="1">
    <location>
        <position position="1258"/>
    </location>
    <ligand>
        <name>Mg(2+)</name>
        <dbReference type="ChEBI" id="CHEBI:18420"/>
        <label>3</label>
        <note>catalytic; for integrase activity</note>
    </ligand>
</feature>
<feature type="binding site" evidence="5">
    <location>
        <position position="1294"/>
    </location>
    <ligand>
        <name>Mg(2+)</name>
        <dbReference type="ChEBI" id="CHEBI:18420"/>
        <label>3</label>
        <note>catalytic; for integrase activity</note>
    </ligand>
</feature>
<feature type="site" description="Cleavage; by viral protease" evidence="1">
    <location>
        <begin position="128"/>
        <end position="129"/>
    </location>
</feature>
<feature type="site" description="Cis/trans isomerization of proline peptide bond; by human PPIA/CYPA" evidence="1">
    <location>
        <begin position="217"/>
        <end position="218"/>
    </location>
</feature>
<feature type="site" description="Cleavage; by viral protease" evidence="1">
    <location>
        <begin position="359"/>
        <end position="360"/>
    </location>
</feature>
<feature type="site" description="Cleavage; by viral protease" evidence="1">
    <location>
        <begin position="372"/>
        <end position="373"/>
    </location>
</feature>
<feature type="site" description="Cleavage; by viral protease" evidence="8">
    <location>
        <begin position="427"/>
        <end position="428"/>
    </location>
</feature>
<feature type="site" description="Cleavage; by viral protease" evidence="1">
    <location>
        <begin position="435"/>
        <end position="436"/>
    </location>
</feature>
<feature type="site" description="Cleavage; by viral protease" evidence="1">
    <location>
        <begin position="483"/>
        <end position="484"/>
    </location>
</feature>
<feature type="site" description="Cleavage; by viral protease" evidence="1">
    <location>
        <begin position="582"/>
        <end position="583"/>
    </location>
</feature>
<feature type="site" description="Essential for RT p66/p51 heterodimerization" evidence="1">
    <location>
        <position position="983"/>
    </location>
</feature>
<feature type="site" description="Essential for RT p66/p51 heterodimerization" evidence="1">
    <location>
        <position position="996"/>
    </location>
</feature>
<feature type="site" description="Cleavage; by viral protease; partial" evidence="1">
    <location>
        <begin position="1022"/>
        <end position="1023"/>
    </location>
</feature>
<feature type="site" description="Cleavage; by viral protease" evidence="1">
    <location>
        <begin position="1142"/>
        <end position="1143"/>
    </location>
</feature>
<feature type="modified residue" description="Phosphotyrosine; by host" evidence="1">
    <location>
        <position position="128"/>
    </location>
</feature>
<feature type="lipid moiety-binding region" description="N-myristoyl glycine; by host" evidence="1">
    <location>
        <position position="2"/>
    </location>
</feature>
<dbReference type="EC" id="3.4.23.16"/>
<dbReference type="EC" id="2.7.7.49"/>
<dbReference type="EC" id="2.7.7.7"/>
<dbReference type="EC" id="3.1.26.13"/>
<dbReference type="EC" id="3.1.13.2"/>
<dbReference type="EC" id="2.7.7.-" evidence="5"/>
<dbReference type="EC" id="3.1.-.-" evidence="5"/>
<dbReference type="EMBL" id="AJ249239">
    <property type="protein sequence ID" value="CAB58989.1"/>
    <property type="molecule type" value="Genomic_RNA"/>
</dbReference>
<dbReference type="SMR" id="Q9QBY3"/>
<dbReference type="BindingDB" id="Q9QBY3"/>
<dbReference type="MEROPS" id="A02.001"/>
<dbReference type="PRO" id="PR:Q9QBY3"/>
<dbReference type="Proteomes" id="UP000101651">
    <property type="component" value="Segment"/>
</dbReference>
<dbReference type="GO" id="GO:0043657">
    <property type="term" value="C:host cell"/>
    <property type="evidence" value="ECO:0007669"/>
    <property type="project" value="GOC"/>
</dbReference>
<dbReference type="GO" id="GO:0042025">
    <property type="term" value="C:host cell nucleus"/>
    <property type="evidence" value="ECO:0007669"/>
    <property type="project" value="UniProtKB-SubCell"/>
</dbReference>
<dbReference type="GO" id="GO:0020002">
    <property type="term" value="C:host cell plasma membrane"/>
    <property type="evidence" value="ECO:0007669"/>
    <property type="project" value="UniProtKB-SubCell"/>
</dbReference>
<dbReference type="GO" id="GO:0072494">
    <property type="term" value="C:host multivesicular body"/>
    <property type="evidence" value="ECO:0007669"/>
    <property type="project" value="UniProtKB-SubCell"/>
</dbReference>
<dbReference type="GO" id="GO:0016020">
    <property type="term" value="C:membrane"/>
    <property type="evidence" value="ECO:0007669"/>
    <property type="project" value="UniProtKB-KW"/>
</dbReference>
<dbReference type="GO" id="GO:0019013">
    <property type="term" value="C:viral nucleocapsid"/>
    <property type="evidence" value="ECO:0007669"/>
    <property type="project" value="UniProtKB-KW"/>
</dbReference>
<dbReference type="GO" id="GO:0055036">
    <property type="term" value="C:virion membrane"/>
    <property type="evidence" value="ECO:0007669"/>
    <property type="project" value="UniProtKB-SubCell"/>
</dbReference>
<dbReference type="GO" id="GO:0004190">
    <property type="term" value="F:aspartic-type endopeptidase activity"/>
    <property type="evidence" value="ECO:0007669"/>
    <property type="project" value="UniProtKB-KW"/>
</dbReference>
<dbReference type="GO" id="GO:0003677">
    <property type="term" value="F:DNA binding"/>
    <property type="evidence" value="ECO:0007669"/>
    <property type="project" value="UniProtKB-KW"/>
</dbReference>
<dbReference type="GO" id="GO:0003887">
    <property type="term" value="F:DNA-directed DNA polymerase activity"/>
    <property type="evidence" value="ECO:0007669"/>
    <property type="project" value="UniProtKB-KW"/>
</dbReference>
<dbReference type="GO" id="GO:0004533">
    <property type="term" value="F:exoribonuclease H activity"/>
    <property type="evidence" value="ECO:0007669"/>
    <property type="project" value="UniProtKB-EC"/>
</dbReference>
<dbReference type="GO" id="GO:0008289">
    <property type="term" value="F:lipid binding"/>
    <property type="evidence" value="ECO:0007669"/>
    <property type="project" value="UniProtKB-KW"/>
</dbReference>
<dbReference type="GO" id="GO:0035613">
    <property type="term" value="F:RNA stem-loop binding"/>
    <property type="evidence" value="ECO:0007669"/>
    <property type="project" value="TreeGrafter"/>
</dbReference>
<dbReference type="GO" id="GO:0003964">
    <property type="term" value="F:RNA-directed DNA polymerase activity"/>
    <property type="evidence" value="ECO:0007669"/>
    <property type="project" value="UniProtKB-KW"/>
</dbReference>
<dbReference type="GO" id="GO:0004523">
    <property type="term" value="F:RNA-DNA hybrid ribonuclease activity"/>
    <property type="evidence" value="ECO:0007669"/>
    <property type="project" value="InterPro"/>
</dbReference>
<dbReference type="GO" id="GO:0005198">
    <property type="term" value="F:structural molecule activity"/>
    <property type="evidence" value="ECO:0007669"/>
    <property type="project" value="InterPro"/>
</dbReference>
<dbReference type="GO" id="GO:0008270">
    <property type="term" value="F:zinc ion binding"/>
    <property type="evidence" value="ECO:0007669"/>
    <property type="project" value="UniProtKB-KW"/>
</dbReference>
<dbReference type="GO" id="GO:0015074">
    <property type="term" value="P:DNA integration"/>
    <property type="evidence" value="ECO:0007669"/>
    <property type="project" value="UniProtKB-KW"/>
</dbReference>
<dbReference type="GO" id="GO:0006310">
    <property type="term" value="P:DNA recombination"/>
    <property type="evidence" value="ECO:0007669"/>
    <property type="project" value="UniProtKB-KW"/>
</dbReference>
<dbReference type="GO" id="GO:0075713">
    <property type="term" value="P:establishment of integrated proviral latency"/>
    <property type="evidence" value="ECO:0007669"/>
    <property type="project" value="UniProtKB-KW"/>
</dbReference>
<dbReference type="GO" id="GO:0006508">
    <property type="term" value="P:proteolysis"/>
    <property type="evidence" value="ECO:0007669"/>
    <property type="project" value="UniProtKB-KW"/>
</dbReference>
<dbReference type="GO" id="GO:0046718">
    <property type="term" value="P:symbiont entry into host cell"/>
    <property type="evidence" value="ECO:0007669"/>
    <property type="project" value="UniProtKB-KW"/>
</dbReference>
<dbReference type="GO" id="GO:0052151">
    <property type="term" value="P:symbiont-mediated activation of host apoptosis"/>
    <property type="evidence" value="ECO:0007669"/>
    <property type="project" value="UniProtKB-KW"/>
</dbReference>
<dbReference type="GO" id="GO:0039657">
    <property type="term" value="P:symbiont-mediated suppression of host gene expression"/>
    <property type="evidence" value="ECO:0007669"/>
    <property type="project" value="UniProtKB-KW"/>
</dbReference>
<dbReference type="GO" id="GO:0044826">
    <property type="term" value="P:viral genome integration into host DNA"/>
    <property type="evidence" value="ECO:0007669"/>
    <property type="project" value="UniProtKB-KW"/>
</dbReference>
<dbReference type="GO" id="GO:0075732">
    <property type="term" value="P:viral penetration into host nucleus"/>
    <property type="evidence" value="ECO:0007669"/>
    <property type="project" value="UniProtKB-KW"/>
</dbReference>
<dbReference type="GO" id="GO:0075523">
    <property type="term" value="P:viral translational frameshifting"/>
    <property type="evidence" value="ECO:0007669"/>
    <property type="project" value="UniProtKB-KW"/>
</dbReference>
<dbReference type="CDD" id="cd05482">
    <property type="entry name" value="HIV_retropepsin_like"/>
    <property type="match status" value="1"/>
</dbReference>
<dbReference type="CDD" id="cd01645">
    <property type="entry name" value="RT_Rtv"/>
    <property type="match status" value="1"/>
</dbReference>
<dbReference type="FunFam" id="1.10.1200.30:FF:000001">
    <property type="entry name" value="Gag polyprotein"/>
    <property type="match status" value="1"/>
</dbReference>
<dbReference type="FunFam" id="1.10.375.10:FF:000001">
    <property type="entry name" value="Gag polyprotein"/>
    <property type="match status" value="1"/>
</dbReference>
<dbReference type="FunFam" id="4.10.60.10:FF:000001">
    <property type="entry name" value="Gag polyprotein"/>
    <property type="match status" value="1"/>
</dbReference>
<dbReference type="FunFam" id="2.40.70.10:FF:000001">
    <property type="entry name" value="Gag-Pol polyprotein"/>
    <property type="match status" value="1"/>
</dbReference>
<dbReference type="FunFam" id="3.30.420.10:FF:000017">
    <property type="entry name" value="POL polyprotein"/>
    <property type="match status" value="1"/>
</dbReference>
<dbReference type="FunFam" id="3.30.70.270:FF:000016">
    <property type="entry name" value="POL polyprotein"/>
    <property type="match status" value="1"/>
</dbReference>
<dbReference type="Gene3D" id="1.10.10.200">
    <property type="match status" value="1"/>
</dbReference>
<dbReference type="Gene3D" id="1.10.1200.30">
    <property type="match status" value="1"/>
</dbReference>
<dbReference type="Gene3D" id="3.30.70.270">
    <property type="match status" value="3"/>
</dbReference>
<dbReference type="Gene3D" id="2.40.70.10">
    <property type="entry name" value="Acid Proteases"/>
    <property type="match status" value="1"/>
</dbReference>
<dbReference type="Gene3D" id="3.10.10.10">
    <property type="entry name" value="HIV Type 1 Reverse Transcriptase, subunit A, domain 1"/>
    <property type="match status" value="1"/>
</dbReference>
<dbReference type="Gene3D" id="1.10.375.10">
    <property type="entry name" value="Human Immunodeficiency Virus Type 1 Capsid Protein"/>
    <property type="match status" value="1"/>
</dbReference>
<dbReference type="Gene3D" id="1.10.150.90">
    <property type="entry name" value="Immunodeficiency lentiviruses, gag gene matrix protein p17"/>
    <property type="match status" value="1"/>
</dbReference>
<dbReference type="Gene3D" id="2.30.30.10">
    <property type="entry name" value="Integrase, C-terminal domain superfamily, retroviral"/>
    <property type="match status" value="1"/>
</dbReference>
<dbReference type="Gene3D" id="3.30.420.10">
    <property type="entry name" value="Ribonuclease H-like superfamily/Ribonuclease H"/>
    <property type="match status" value="2"/>
</dbReference>
<dbReference type="Gene3D" id="1.20.5.760">
    <property type="entry name" value="Single helix bin"/>
    <property type="match status" value="1"/>
</dbReference>
<dbReference type="Gene3D" id="4.10.60.10">
    <property type="entry name" value="Zinc finger, CCHC-type"/>
    <property type="match status" value="1"/>
</dbReference>
<dbReference type="InterPro" id="IPR001969">
    <property type="entry name" value="Aspartic_peptidase_AS"/>
</dbReference>
<dbReference type="InterPro" id="IPR043502">
    <property type="entry name" value="DNA/RNA_pol_sf"/>
</dbReference>
<dbReference type="InterPro" id="IPR045345">
    <property type="entry name" value="Gag_p24_C"/>
</dbReference>
<dbReference type="InterPro" id="IPR017856">
    <property type="entry name" value="Integrase-like_N"/>
</dbReference>
<dbReference type="InterPro" id="IPR036862">
    <property type="entry name" value="Integrase_C_dom_sf_retrovir"/>
</dbReference>
<dbReference type="InterPro" id="IPR001037">
    <property type="entry name" value="Integrase_C_retrovir"/>
</dbReference>
<dbReference type="InterPro" id="IPR001584">
    <property type="entry name" value="Integrase_cat-core"/>
</dbReference>
<dbReference type="InterPro" id="IPR003308">
    <property type="entry name" value="Integrase_Zn-bd_dom_N"/>
</dbReference>
<dbReference type="InterPro" id="IPR000071">
    <property type="entry name" value="Lentvrl_matrix_N"/>
</dbReference>
<dbReference type="InterPro" id="IPR012344">
    <property type="entry name" value="Matrix_HIV/RSV_N"/>
</dbReference>
<dbReference type="InterPro" id="IPR001995">
    <property type="entry name" value="Peptidase_A2_cat"/>
</dbReference>
<dbReference type="InterPro" id="IPR021109">
    <property type="entry name" value="Peptidase_aspartic_dom_sf"/>
</dbReference>
<dbReference type="InterPro" id="IPR034170">
    <property type="entry name" value="Retropepsin-like_cat_dom"/>
</dbReference>
<dbReference type="InterPro" id="IPR018061">
    <property type="entry name" value="Retropepsins"/>
</dbReference>
<dbReference type="InterPro" id="IPR008916">
    <property type="entry name" value="Retrov_capsid_C"/>
</dbReference>
<dbReference type="InterPro" id="IPR008919">
    <property type="entry name" value="Retrov_capsid_N"/>
</dbReference>
<dbReference type="InterPro" id="IPR010999">
    <property type="entry name" value="Retrovr_matrix"/>
</dbReference>
<dbReference type="InterPro" id="IPR043128">
    <property type="entry name" value="Rev_trsase/Diguanyl_cyclase"/>
</dbReference>
<dbReference type="InterPro" id="IPR012337">
    <property type="entry name" value="RNaseH-like_sf"/>
</dbReference>
<dbReference type="InterPro" id="IPR002156">
    <property type="entry name" value="RNaseH_domain"/>
</dbReference>
<dbReference type="InterPro" id="IPR036397">
    <property type="entry name" value="RNaseH_sf"/>
</dbReference>
<dbReference type="InterPro" id="IPR000477">
    <property type="entry name" value="RT_dom"/>
</dbReference>
<dbReference type="InterPro" id="IPR010659">
    <property type="entry name" value="RVT_connect"/>
</dbReference>
<dbReference type="InterPro" id="IPR010661">
    <property type="entry name" value="RVT_thumb"/>
</dbReference>
<dbReference type="InterPro" id="IPR001878">
    <property type="entry name" value="Znf_CCHC"/>
</dbReference>
<dbReference type="InterPro" id="IPR036875">
    <property type="entry name" value="Znf_CCHC_sf"/>
</dbReference>
<dbReference type="PANTHER" id="PTHR41694">
    <property type="entry name" value="ENDOGENOUS RETROVIRUS GROUP K MEMBER POL PROTEIN"/>
    <property type="match status" value="1"/>
</dbReference>
<dbReference type="PANTHER" id="PTHR41694:SF3">
    <property type="entry name" value="RNA-DIRECTED DNA POLYMERASE-RELATED"/>
    <property type="match status" value="1"/>
</dbReference>
<dbReference type="Pfam" id="PF00540">
    <property type="entry name" value="Gag_p17"/>
    <property type="match status" value="1"/>
</dbReference>
<dbReference type="Pfam" id="PF19317">
    <property type="entry name" value="Gag_p24_C"/>
    <property type="match status" value="1"/>
</dbReference>
<dbReference type="Pfam" id="PF00552">
    <property type="entry name" value="IN_DBD_C"/>
    <property type="match status" value="1"/>
</dbReference>
<dbReference type="Pfam" id="PF02022">
    <property type="entry name" value="Integrase_Zn"/>
    <property type="match status" value="1"/>
</dbReference>
<dbReference type="Pfam" id="PF00075">
    <property type="entry name" value="RNase_H"/>
    <property type="match status" value="1"/>
</dbReference>
<dbReference type="Pfam" id="PF00665">
    <property type="entry name" value="rve"/>
    <property type="match status" value="1"/>
</dbReference>
<dbReference type="Pfam" id="PF00077">
    <property type="entry name" value="RVP"/>
    <property type="match status" value="1"/>
</dbReference>
<dbReference type="Pfam" id="PF00078">
    <property type="entry name" value="RVT_1"/>
    <property type="match status" value="1"/>
</dbReference>
<dbReference type="Pfam" id="PF06815">
    <property type="entry name" value="RVT_connect"/>
    <property type="match status" value="1"/>
</dbReference>
<dbReference type="Pfam" id="PF06817">
    <property type="entry name" value="RVT_thumb"/>
    <property type="match status" value="1"/>
</dbReference>
<dbReference type="Pfam" id="PF00098">
    <property type="entry name" value="zf-CCHC"/>
    <property type="match status" value="2"/>
</dbReference>
<dbReference type="PRINTS" id="PR00234">
    <property type="entry name" value="HIV1MATRIX"/>
</dbReference>
<dbReference type="SMART" id="SM00343">
    <property type="entry name" value="ZnF_C2HC"/>
    <property type="match status" value="2"/>
</dbReference>
<dbReference type="SUPFAM" id="SSF50630">
    <property type="entry name" value="Acid proteases"/>
    <property type="match status" value="1"/>
</dbReference>
<dbReference type="SUPFAM" id="SSF50122">
    <property type="entry name" value="DNA-binding domain of retroviral integrase"/>
    <property type="match status" value="1"/>
</dbReference>
<dbReference type="SUPFAM" id="SSF56672">
    <property type="entry name" value="DNA/RNA polymerases"/>
    <property type="match status" value="1"/>
</dbReference>
<dbReference type="SUPFAM" id="SSF46919">
    <property type="entry name" value="N-terminal Zn binding domain of HIV integrase"/>
    <property type="match status" value="1"/>
</dbReference>
<dbReference type="SUPFAM" id="SSF47836">
    <property type="entry name" value="Retroviral matrix proteins"/>
    <property type="match status" value="1"/>
</dbReference>
<dbReference type="SUPFAM" id="SSF47353">
    <property type="entry name" value="Retrovirus capsid dimerization domain-like"/>
    <property type="match status" value="1"/>
</dbReference>
<dbReference type="SUPFAM" id="SSF47943">
    <property type="entry name" value="Retrovirus capsid protein, N-terminal core domain"/>
    <property type="match status" value="1"/>
</dbReference>
<dbReference type="SUPFAM" id="SSF57756">
    <property type="entry name" value="Retrovirus zinc finger-like domains"/>
    <property type="match status" value="1"/>
</dbReference>
<dbReference type="SUPFAM" id="SSF53098">
    <property type="entry name" value="Ribonuclease H-like"/>
    <property type="match status" value="2"/>
</dbReference>
<dbReference type="PROSITE" id="PS50175">
    <property type="entry name" value="ASP_PROT_RETROV"/>
    <property type="match status" value="1"/>
</dbReference>
<dbReference type="PROSITE" id="PS00141">
    <property type="entry name" value="ASP_PROTEASE"/>
    <property type="match status" value="1"/>
</dbReference>
<dbReference type="PROSITE" id="PS50994">
    <property type="entry name" value="INTEGRASE"/>
    <property type="match status" value="1"/>
</dbReference>
<dbReference type="PROSITE" id="PS51027">
    <property type="entry name" value="INTEGRASE_DBD"/>
    <property type="match status" value="1"/>
</dbReference>
<dbReference type="PROSITE" id="PS50879">
    <property type="entry name" value="RNASE_H_1"/>
    <property type="match status" value="1"/>
</dbReference>
<dbReference type="PROSITE" id="PS50878">
    <property type="entry name" value="RT_POL"/>
    <property type="match status" value="1"/>
</dbReference>
<dbReference type="PROSITE" id="PS50158">
    <property type="entry name" value="ZF_CCHC"/>
    <property type="match status" value="2"/>
</dbReference>
<dbReference type="PROSITE" id="PS50876">
    <property type="entry name" value="ZF_INTEGRASE"/>
    <property type="match status" value="1"/>
</dbReference>
<protein>
    <recommendedName>
        <fullName>Gag-Pol polyprotein</fullName>
    </recommendedName>
    <alternativeName>
        <fullName>Pr160Gag-Pol</fullName>
    </alternativeName>
    <component>
        <recommendedName>
            <fullName>Matrix protein p17</fullName>
            <shortName>MA</shortName>
        </recommendedName>
    </component>
    <component>
        <recommendedName>
            <fullName>Capsid protein p24</fullName>
            <shortName>CA</shortName>
        </recommendedName>
    </component>
    <component>
        <recommendedName>
            <fullName evidence="7">Spacer peptide 1</fullName>
            <shortName>SP1</shortName>
        </recommendedName>
        <alternativeName>
            <fullName>p2</fullName>
        </alternativeName>
    </component>
    <component>
        <recommendedName>
            <fullName>Nucleocapsid protein p7</fullName>
            <shortName>NC</shortName>
        </recommendedName>
    </component>
    <component>
        <recommendedName>
            <fullName>Transframe peptide</fullName>
            <shortName>TF</shortName>
        </recommendedName>
    </component>
    <component>
        <recommendedName>
            <fullName>p6-pol</fullName>
            <shortName>p6*</shortName>
        </recommendedName>
    </component>
    <component>
        <recommendedName>
            <fullName>Protease</fullName>
            <ecNumber>3.4.23.16</ecNumber>
        </recommendedName>
        <alternativeName>
            <fullName>PR</fullName>
        </alternativeName>
        <alternativeName>
            <fullName>Retropepsin</fullName>
        </alternativeName>
    </component>
    <component>
        <recommendedName>
            <fullName>Reverse transcriptase/ribonuclease H</fullName>
            <ecNumber>2.7.7.49</ecNumber>
            <ecNumber>2.7.7.7</ecNumber>
            <ecNumber>3.1.26.13</ecNumber>
        </recommendedName>
        <alternativeName>
            <fullName>Exoribonuclease H</fullName>
            <ecNumber>3.1.13.2</ecNumber>
        </alternativeName>
        <alternativeName>
            <fullName>p66 RT</fullName>
        </alternativeName>
    </component>
    <component>
        <recommendedName>
            <fullName>p51 RT</fullName>
        </recommendedName>
    </component>
    <component>
        <recommendedName>
            <fullName>p15</fullName>
        </recommendedName>
    </component>
    <component>
        <recommendedName>
            <fullName>Integrase</fullName>
            <shortName>IN</shortName>
            <ecNumber evidence="5">2.7.7.-</ecNumber>
            <ecNumber evidence="5">3.1.-.-</ecNumber>
        </recommendedName>
    </component>
</protein>
<gene>
    <name type="primary">gag-pol</name>
</gene>
<reference key="1">
    <citation type="journal article" date="2000" name="AIDS Res. Hum. Retroviruses">
        <title>Near-full-length genome sequencing of divergent African HIV type 1 subtype F viruses leads to the identification of a new HIV type 1 subtype designated K.</title>
        <authorList>
            <person name="Triques K."/>
            <person name="Bourgeois A."/>
            <person name="Vidale N."/>
            <person name="Mpoudi-Ngole E."/>
            <person name="Mulanga-Kabeya C."/>
            <person name="Nzilambi N."/>
            <person name="Torimiro N."/>
            <person name="Saman E."/>
            <person name="Delaporte E."/>
            <person name="Peeters M."/>
        </authorList>
    </citation>
    <scope>NUCLEOTIDE SEQUENCE [GENOMIC RNA]</scope>
</reference>
<organismHost>
    <name type="scientific">Homo sapiens</name>
    <name type="common">Human</name>
    <dbReference type="NCBI Taxonomy" id="9606"/>
</organismHost>
<keyword id="KW-1073">Activation of host caspases by virus</keyword>
<keyword id="KW-0014">AIDS</keyword>
<keyword id="KW-0064">Aspartyl protease</keyword>
<keyword id="KW-0167">Capsid protein</keyword>
<keyword id="KW-0229">DNA integration</keyword>
<keyword id="KW-0233">DNA recombination</keyword>
<keyword id="KW-0238">DNA-binding</keyword>
<keyword id="KW-0239">DNA-directed DNA polymerase</keyword>
<keyword id="KW-0255">Endonuclease</keyword>
<keyword id="KW-1262">Eukaryotic host gene expression shutoff by virus</keyword>
<keyword id="KW-1193">Eukaryotic host translation shutoff by virus</keyword>
<keyword id="KW-1032">Host cell membrane</keyword>
<keyword id="KW-1035">Host cytoplasm</keyword>
<keyword id="KW-1039">Host endosome</keyword>
<keyword id="KW-1190">Host gene expression shutoff by virus</keyword>
<keyword id="KW-1043">Host membrane</keyword>
<keyword id="KW-1048">Host nucleus</keyword>
<keyword id="KW-0945">Host-virus interaction</keyword>
<keyword id="KW-0378">Hydrolase</keyword>
<keyword id="KW-0446">Lipid-binding</keyword>
<keyword id="KW-0449">Lipoprotein</keyword>
<keyword id="KW-0460">Magnesium</keyword>
<keyword id="KW-0472">Membrane</keyword>
<keyword id="KW-0479">Metal-binding</keyword>
<keyword id="KW-1119">Modulation of host cell apoptosis by virus</keyword>
<keyword id="KW-0511">Multifunctional enzyme</keyword>
<keyword id="KW-0519">Myristate</keyword>
<keyword id="KW-0540">Nuclease</keyword>
<keyword id="KW-0548">Nucleotidyltransferase</keyword>
<keyword id="KW-0597">Phosphoprotein</keyword>
<keyword id="KW-0645">Protease</keyword>
<keyword id="KW-0677">Repeat</keyword>
<keyword id="KW-0688">Ribosomal frameshifting</keyword>
<keyword id="KW-0694">RNA-binding</keyword>
<keyword id="KW-0695">RNA-directed DNA polymerase</keyword>
<keyword id="KW-0808">Transferase</keyword>
<keyword id="KW-1179">Viral genome integration</keyword>
<keyword id="KW-0543">Viral nucleoprotein</keyword>
<keyword id="KW-1163">Viral penetration into host nucleus</keyword>
<keyword id="KW-1188">Viral release from host cell</keyword>
<keyword id="KW-0946">Virion</keyword>
<keyword id="KW-0917">Virion maturation</keyword>
<keyword id="KW-1160">Virus entry into host cell</keyword>
<keyword id="KW-0862">Zinc</keyword>
<keyword id="KW-0863">Zinc-finger</keyword>
<proteinExistence type="inferred from homology"/>
<organism>
    <name type="scientific">Human immunodeficiency virus type 1 group M subtype K (isolate 96CM-MP535)</name>
    <name type="common">HIV-1</name>
    <dbReference type="NCBI Taxonomy" id="388906"/>
    <lineage>
        <taxon>Viruses</taxon>
        <taxon>Riboviria</taxon>
        <taxon>Pararnavirae</taxon>
        <taxon>Artverviricota</taxon>
        <taxon>Revtraviricetes</taxon>
        <taxon>Ortervirales</taxon>
        <taxon>Retroviridae</taxon>
        <taxon>Orthoretrovirinae</taxon>
        <taxon>Lentivirus</taxon>
        <taxon>Human immunodeficiency virus type 1</taxon>
    </lineage>
</organism>
<evidence type="ECO:0000250" key="1"/>
<evidence type="ECO:0000250" key="2">
    <source>
        <dbReference type="UniProtKB" id="P03347"/>
    </source>
</evidence>
<evidence type="ECO:0000250" key="3">
    <source>
        <dbReference type="UniProtKB" id="P03366"/>
    </source>
</evidence>
<evidence type="ECO:0000250" key="4">
    <source>
        <dbReference type="UniProtKB" id="P03367"/>
    </source>
</evidence>
<evidence type="ECO:0000250" key="5">
    <source>
        <dbReference type="UniProtKB" id="P04585"/>
    </source>
</evidence>
<evidence type="ECO:0000250" key="6">
    <source>
        <dbReference type="UniProtKB" id="P12493"/>
    </source>
</evidence>
<evidence type="ECO:0000250" key="7">
    <source>
        <dbReference type="UniProtKB" id="P12497"/>
    </source>
</evidence>
<evidence type="ECO:0000255" key="8"/>
<evidence type="ECO:0000255" key="9">
    <source>
        <dbReference type="PROSITE-ProRule" id="PRU00047"/>
    </source>
</evidence>
<evidence type="ECO:0000255" key="10">
    <source>
        <dbReference type="PROSITE-ProRule" id="PRU00275"/>
    </source>
</evidence>
<evidence type="ECO:0000255" key="11">
    <source>
        <dbReference type="PROSITE-ProRule" id="PRU00405"/>
    </source>
</evidence>
<evidence type="ECO:0000255" key="12">
    <source>
        <dbReference type="PROSITE-ProRule" id="PRU00408"/>
    </source>
</evidence>
<evidence type="ECO:0000255" key="13">
    <source>
        <dbReference type="PROSITE-ProRule" id="PRU00450"/>
    </source>
</evidence>
<evidence type="ECO:0000255" key="14">
    <source>
        <dbReference type="PROSITE-ProRule" id="PRU00457"/>
    </source>
</evidence>
<evidence type="ECO:0000255" key="15">
    <source>
        <dbReference type="PROSITE-ProRule" id="PRU00506"/>
    </source>
</evidence>
<evidence type="ECO:0000255" key="16">
    <source>
        <dbReference type="PROSITE-ProRule" id="PRU10094"/>
    </source>
</evidence>
<evidence type="ECO:0000256" key="17">
    <source>
        <dbReference type="SAM" id="MobiDB-lite"/>
    </source>
</evidence>
<evidence type="ECO:0000305" key="18"/>
<name>POL_HV196</name>
<comment type="function">
    <molecule>Gag-Pol polyprotein</molecule>
    <text evidence="1">Mediates, with Gag polyprotein, the essential events in virion assembly, including binding the plasma membrane, making the protein-protein interactions necessary to create spherical particles, recruiting the viral Env proteins, and packaging the genomic RNA via direct interactions with the RNA packaging sequence (Psi). Gag-Pol polyprotein may regulate its own translation, by the binding genomic RNA in the 5'-UTR. At low concentration, the polyprotein would promote translation, whereas at high concentration, the polyprotein would encapsidate genomic RNA and then shut off translation.</text>
</comment>
<comment type="function">
    <molecule>Matrix protein p17</molecule>
    <text evidence="7">Targets the polyprotein to the plasma membrane via a multipartite membrane-binding signal, that includes its myristoylated N-terminus. Matrix protein is part of the pre-integration complex. Implicated in the release from host cell mediated by Vpu. Binds to RNA.</text>
</comment>
<comment type="function">
    <molecule>Capsid protein p24</molecule>
    <text evidence="5 7">Forms the conical core that encapsulates the genomic RNA-nucleocapsid complex in the virion. Most core are conical, with only 7% tubular. The core is constituted by capsid protein hexamer subunits. The core is disassembled soon after virion entry (By similarity). Host restriction factors such as TRIM5-alpha or TRIMCyp bind retroviral capsids and cause premature capsid disassembly, leading to blocks in reverse transcription. Capsid restriction by TRIM5 is one of the factors which restricts HIV-1 to the human species. Host PIN1 apparently facilitates the virion uncoating. On the other hand, interactions with PDZD8 or CYPA stabilize the capsid.</text>
</comment>
<comment type="function">
    <molecule>Nucleocapsid protein p7</molecule>
    <text evidence="5">Encapsulates and protects viral dimeric unspliced genomic RNA (gRNA). Binds these RNAs through its zinc fingers. Acts as a nucleic acid chaperone which is involved in rearangement of nucleic acid secondary structure during gRNA retrotranscription. Also facilitates template switch leading to recombination. As part of the polyprotein, participates in gRNA dimerization, packaging, tRNA incorporation and virion assembly.</text>
</comment>
<comment type="function">
    <molecule>Protease</molecule>
    <text evidence="5 10">Aspartyl protease that mediates proteolytic cleavages of Gag and Gag-Pol polyproteins during or shortly after the release of the virion from the plasma membrane. Cleavages take place as an ordered, step-wise cascade to yield mature proteins. This process is called maturation. Displays maximal activity during the budding process just prior to particle release from the cell. Also cleaves Nef and Vif, probably concomitantly with viral structural proteins on maturation of virus particles. Hydrolyzes host EIF4GI and PABP1 in order to shut off the capped cellular mRNA translation. The resulting inhibition of cellular protein synthesis serves to ensure maximal viral gene expression and to evade host immune response. Also mediates cleavage of host YTHDF3. Mediates cleavage of host CARD8, thereby activating the CARD8 inflammasome, leading to the clearance of latent HIV-1 in patient CD4(+) T-cells after viral reactivation; in contrast, HIV-1 can evade CARD8-sensing when its protease remains inactive in infected cells prior to viral budding (By similarity).</text>
</comment>
<comment type="function">
    <molecule>Reverse transcriptase/ribonuclease H</molecule>
    <text evidence="5">Multifunctional enzyme that converts the viral RNA genome into dsDNA in the cytoplasm, shortly after virus entry into the cell. This enzyme displays a DNA polymerase activity that can copy either DNA or RNA templates, and a ribonuclease H (RNase H) activity that cleaves the RNA strand of RNA-DNA heteroduplexes in a partially processive 3' to 5' endonucleasic mode. Conversion of viral genomic RNA into dsDNA requires many steps. A tRNA(3)-Lys binds to the primer-binding site (PBS) situated at the 5'-end of the viral RNA. RT uses the 3' end of the tRNA primer to perform a short round of RNA-dependent minus-strand DNA synthesis. The reading proceeds through the U5 region and ends after the repeated (R) region which is present at both ends of viral RNA. The portion of the RNA-DNA heteroduplex is digested by the RNase H, resulting in a ssDNA product attached to the tRNA primer. This ssDNA/tRNA hybridizes with the identical R region situated at the 3' end of viral RNA. This template exchange, known as minus-strand DNA strong stop transfer, can be either intra- or intermolecular. RT uses the 3' end of this newly synthesized short ssDNA to perform the RNA-dependent minus-strand DNA synthesis of the whole template. RNase H digests the RNA template except for two polypurine tracts (PPTs) situated at the 5'-end and near the center of the genome. It is not clear if both polymerase and RNase H activities are simultaneous. RNase H probably can proceed both in a polymerase-dependent (RNA cut into small fragments by the same RT performing DNA synthesis) and a polymerase-independent mode (cleavage of remaining RNA fragments by free RTs). Secondly, RT performs DNA-directed plus-strand DNA synthesis using the PPTs that have not been removed by RNase H as primers. PPTs and tRNA primers are then removed by RNase H. The 3' and 5' ssDNA PBS regions hybridize to form a circular dsDNA intermediate. Strand displacement synthesis by RT to the PBS and PPT ends produces a blunt ended, linear dsDNA copy of the viral genome that includes long terminal repeats (LTRs) at both ends.</text>
</comment>
<comment type="function">
    <molecule>Integrase</molecule>
    <text evidence="5">Catalyzes viral DNA integration into the host chromosome, by performing a series of DNA cutting and joining reactions. This enzyme activity takes place after virion entry into a cell and reverse transcription of the RNA genome in dsDNA. The first step in the integration process is 3' processing. This step requires a complex comprising the viral genome, matrix protein, Vpr and integrase. This complex is called the pre-integration complex (PIC). The integrase protein removes 2 nucleotides from each 3' end of the viral DNA, leaving recessed CA OH's at the 3' ends. In the second step, the PIC enters cell nucleus. This process is mediated through integrase and Vpr proteins, and allows the virus to infect a non dividing cell. This ability to enter the nucleus is specific of lentiviruses, other retroviruses cannot and rely on cell division to access cell chromosomes. In the third step, termed strand transfer, the integrase protein joins the previously processed 3' ends to the 5' ends of strands of target cellular DNA at the site of integration. The 5'-ends are produced by integrase-catalyzed staggered cuts, 5 bp apart. A Y-shaped, gapped, recombination intermediate results, with the 5'-ends of the viral DNA strands and the 3' ends of target DNA strands remaining unjoined, flanking a gap of 5 bp. The last step is viral DNA integration into host chromosome. This involves host DNA repair synthesis in which the 5 bp gaps between the unjoined strands are filled in and then ligated. Since this process occurs at both cuts flanking the HIV genome, a 5 bp duplication of host DNA is produced at the ends of HIV-1 integration. Alternatively, Integrase may catalyze the excision of viral DNA just after strand transfer, this is termed disintegration.</text>
</comment>
<comment type="catalytic activity">
    <reaction evidence="10">
        <text>Specific for a P1 residue that is hydrophobic, and P1' variable, but often Pro.</text>
        <dbReference type="EC" id="3.4.23.16"/>
    </reaction>
</comment>
<comment type="catalytic activity">
    <reaction evidence="1">
        <text>Endohydrolysis of RNA in RNA/DNA hybrids. Three different cleavage modes: 1. sequence-specific internal cleavage of RNA. Human immunodeficiency virus type 1 and Moloney murine leukemia virus enzymes prefer to cleave the RNA strand one nucleotide away from the RNA-DNA junction. 2. RNA 5'-end directed cleavage 13-19 nucleotides from the RNA end. 3. DNA 3'-end directed cleavage 15-20 nucleotides away from the primer terminus.</text>
        <dbReference type="EC" id="3.1.26.13"/>
    </reaction>
</comment>
<comment type="catalytic activity">
    <reaction evidence="1">
        <text>3'-end directed exonucleolytic cleavage of viral RNA-DNA hybrid.</text>
        <dbReference type="EC" id="3.1.13.2"/>
    </reaction>
</comment>
<comment type="catalytic activity">
    <reaction evidence="11">
        <text>DNA(n) + a 2'-deoxyribonucleoside 5'-triphosphate = DNA(n+1) + diphosphate</text>
        <dbReference type="Rhea" id="RHEA:22508"/>
        <dbReference type="Rhea" id="RHEA-COMP:17339"/>
        <dbReference type="Rhea" id="RHEA-COMP:17340"/>
        <dbReference type="ChEBI" id="CHEBI:33019"/>
        <dbReference type="ChEBI" id="CHEBI:61560"/>
        <dbReference type="ChEBI" id="CHEBI:173112"/>
        <dbReference type="EC" id="2.7.7.49"/>
    </reaction>
</comment>
<comment type="catalytic activity">
    <reaction evidence="11">
        <text>DNA(n) + a 2'-deoxyribonucleoside 5'-triphosphate = DNA(n+1) + diphosphate</text>
        <dbReference type="Rhea" id="RHEA:22508"/>
        <dbReference type="Rhea" id="RHEA-COMP:17339"/>
        <dbReference type="Rhea" id="RHEA-COMP:17340"/>
        <dbReference type="ChEBI" id="CHEBI:33019"/>
        <dbReference type="ChEBI" id="CHEBI:61560"/>
        <dbReference type="ChEBI" id="CHEBI:173112"/>
        <dbReference type="EC" id="2.7.7.7"/>
    </reaction>
</comment>
<comment type="cofactor">
    <cofactor evidence="1">
        <name>Mg(2+)</name>
        <dbReference type="ChEBI" id="CHEBI:18420"/>
    </cofactor>
    <text evidence="1">Binds 2 magnesium ions for reverse transcriptase polymerase activity.</text>
</comment>
<comment type="cofactor">
    <cofactor evidence="1">
        <name>Mg(2+)</name>
        <dbReference type="ChEBI" id="CHEBI:18420"/>
    </cofactor>
    <text evidence="1">Binds 2 magnesium ions for ribonuclease H (RNase H) activity. Substrate-binding is a precondition for magnesium binding.</text>
</comment>
<comment type="cofactor">
    <cofactor evidence="1">
        <name>Mg(2+)</name>
        <dbReference type="ChEBI" id="CHEBI:18420"/>
    </cofactor>
    <text evidence="1">Magnesium ions are required for integrase activity. Binds at least 1, maybe 2 magnesium ions.</text>
</comment>
<comment type="activity regulation">
    <text evidence="1">Protease: The viral protease is inhibited by many synthetic protease inhibitors (PIs), such as amprenavir, atazanavir, indinavir, loprinavir, nelfinavir, ritonavir and saquinavir. Use of protease inhibitors in tritherapy regimens permit more ambitious therapeutic strategies. Reverse transcriptase/ribonuclease H: RT can be inhibited either by nucleoside RT inhibitors (NRTIs) or by non nucleoside RT inhibitors (NNRTIs). NRTIs act as chain terminators, whereas NNRTIs inhibit DNA polymerization by binding a small hydrophobic pocket near the RT active site and inducing an allosteric change in this region. Classical NRTIs are abacavir, adefovir (PMEA), didanosine (ddI), lamivudine (3TC), stavudine (d4T), tenofovir (PMPA), zalcitabine (ddC), and zidovudine (AZT). Classical NNRTIs are atevirdine (BHAP U-87201E), delavirdine, efavirenz (DMP-266), emivirine (I-EBU), and nevirapine (BI-RG-587). The tritherapies used as a basic effective treatment of AIDS associate two NRTIs and one NNRTI.</text>
</comment>
<comment type="subunit">
    <molecule>Matrix protein p17</molecule>
    <text evidence="5 7">Homotrimer; further assembles as hexamers of trimers (By similarity). Interacts with gp41 (via C-terminus) (By similarity). Interacts with host CALM1; this interaction induces a conformational change in the Matrix protein, triggering exposure of the myristate group (By similarity). Interacts with host AP3D1; this interaction allows the polyprotein trafficking to multivesicular bodies during virus assembly (By similarity). Part of the pre-integration complex (PIC) which is composed of viral genome, matrix protein, Vpr and integrase (By similarity).</text>
</comment>
<comment type="subunit">
    <molecule>Capsid protein p24</molecule>
    <text evidence="5 7">Homodimer; the homodimer further multimerizes as homohexamers or homopentamers. Interacts with human PPIA/CYPA (By similarity); This interaction stabilizes the capsid. Interacts with human NUP153 (By similarity). Interacts with host PDZD8; this interaction stabilizes the capsid (By similarity). Interacts with monkey TRIM5; this interaction destabilizes the capsid (By similarity).</text>
</comment>
<comment type="subunit">
    <molecule>Protease</molecule>
    <text evidence="5 7">Homodimer, whose active site consists of two apposed aspartic acid residues.</text>
</comment>
<comment type="subunit">
    <molecule>Reverse transcriptase/ribonuclease H</molecule>
    <text evidence="3">Heterodimer of p66 RT and p51 RT (RT p66/p51) (By similarity). Heterodimerization of RT is essential for DNA polymerase activity (By similarity). The overall folding of the subdomains is similar in p66 RT and p51 RT but the spatial arrangements of the subdomains are dramatically different (By similarity).</text>
</comment>
<comment type="subunit">
    <molecule>Integrase</molecule>
    <text evidence="4 5 7">Homotetramer; may further associate as a homohexadecamer (By similarity). Part of the pre-integration complex (PIC) which is composed of viral genome, matrix protein, Vpr and integrase. Interacts with human SMARCB1/INI1 and human PSIP1/LEDGF isoform 1. Interacts with human KPNA3; this interaction might play a role in nuclear import of the pre-integration complex (By similarity). Interacts with human NUP153; this interaction might play a role in nuclear import of the pre-integration complex (By similarity).</text>
</comment>
<comment type="subcellular location">
    <molecule>Gag-Pol polyprotein</molecule>
    <subcellularLocation>
        <location>Host cell membrane</location>
        <topology>Lipid-anchor</topology>
    </subcellularLocation>
    <subcellularLocation>
        <location>Host endosome</location>
        <location>Host multivesicular body</location>
    </subcellularLocation>
    <text evidence="7">These locations are linked to virus assembly sites. The main location is the cell membrane, but under some circumstances, late endosomal compartments can serve as productive sites for virion assembly.</text>
</comment>
<comment type="subcellular location">
    <molecule>Matrix protein p17</molecule>
    <subcellularLocation>
        <location>Virion membrane</location>
        <topology evidence="18">Lipid-anchor</topology>
    </subcellularLocation>
    <subcellularLocation>
        <location evidence="1">Host nucleus</location>
    </subcellularLocation>
    <subcellularLocation>
        <location evidence="1">Host cytoplasm</location>
    </subcellularLocation>
</comment>
<comment type="subcellular location">
    <molecule>Capsid protein p24</molecule>
    <subcellularLocation>
        <location evidence="18">Virion</location>
    </subcellularLocation>
</comment>
<comment type="subcellular location">
    <molecule>Nucleocapsid protein p7</molecule>
    <subcellularLocation>
        <location evidence="18">Virion</location>
    </subcellularLocation>
</comment>
<comment type="subcellular location">
    <molecule>Reverse transcriptase/ribonuclease H</molecule>
    <subcellularLocation>
        <location evidence="18">Virion</location>
    </subcellularLocation>
</comment>
<comment type="subcellular location">
    <molecule>Integrase</molecule>
    <subcellularLocation>
        <location evidence="18">Virion</location>
    </subcellularLocation>
    <subcellularLocation>
        <location evidence="18">Host nucleus</location>
    </subcellularLocation>
    <subcellularLocation>
        <location evidence="18">Host cytoplasm</location>
    </subcellularLocation>
    <text evidence="18">Nuclear at initial phase, cytoplasmic at assembly.</text>
</comment>
<comment type="alternative products">
    <event type="ribosomal frameshifting"/>
    <isoform>
        <id>Q9QBY3-1</id>
        <name>Gag-Pol polyprotein</name>
        <sequence type="displayed"/>
    </isoform>
    <isoform>
        <id>Q9QBY4-1</id>
        <name>Gag polyprotein</name>
        <sequence type="external"/>
    </isoform>
    <text>Translation results in the formation of the Gag polyprotein most of the time. Ribosomal frameshifting at the gag-pol genes boundary occurs at low frequency and produces the Gag-Pol polyprotein. This strategy of translation probably allows the virus to modulate the quantity of each viral protein. Maintenance of a correct Gag to Gag-Pol ratio is essential for RNA dimerization and viral infectivity.</text>
</comment>
<comment type="domain">
    <molecule>Reverse transcriptase/ribonuclease H</molecule>
    <text evidence="1">RT is structured in five subdomains: finger, palm, thumb, connection and RNase H. Within the palm subdomain, the 'primer grip' region is thought to be involved in the positioning of the primer terminus for accommodating the incoming nucleotide. The RNase H domain stabilizes the association of RT with primer-template.</text>
</comment>
<comment type="domain">
    <molecule>Reverse transcriptase/ribonuclease H</molecule>
    <text evidence="1">The tryptophan repeat motif is involved in RT p66/p51 dimerization (By similarity).</text>
</comment>
<comment type="domain">
    <molecule>Integrase</molecule>
    <text evidence="1">The core domain contains the D-x(n)-D-x(35)-E motif, named for the phylogenetically conserved glutamic acid and aspartic acid residues and the invariant 35 amino acid spacing between the second and third acidic residues. Each acidic residue of the D,D(35)E motif is independently essential for the 3'-processing and strand transfer activities of purified integrase protein.</text>
</comment>
<comment type="PTM">
    <molecule>Gag-Pol polyprotein</molecule>
    <text evidence="5 11">Specific enzymatic cleavages by the viral protease yield mature proteins. The protease is released by autocatalytic cleavage. The polyprotein is cleaved during and after budding, this process is termed maturation. Proteolytic cleavage of p66 RT removes the RNase H domain to yield the p51 RT subunit. Nucleocapsid protein p7 might be further cleaved after virus entry.</text>
</comment>
<comment type="PTM">
    <molecule>Matrix protein p17</molecule>
    <text evidence="5">Tyrosine phosphorylated presumably in the virion by a host kinase. Phosphorylation is apparently not a major regulator of membrane association.</text>
</comment>
<comment type="PTM">
    <molecule>Capsid protein p24</molecule>
    <text evidence="6">Phosphorylated possibly by host MAPK1; this phosphorylation is necessary for Pin1-mediated virion uncoating.</text>
</comment>
<comment type="PTM">
    <molecule>Nucleocapsid protein p7</molecule>
    <text evidence="2">Methylated by host PRMT6, impairing its function by reducing RNA annealing and the initiation of reverse transcription.</text>
</comment>
<comment type="miscellaneous">
    <molecule>Reverse transcriptase/ribonuclease H</molecule>
    <text evidence="1">Error-prone enzyme that lacks a proof-reading function. High mutations rate is a direct consequence of this characteristic. RT also displays frequent template switching leading to high recombination rate. Recombination mostly occurs between homologous regions of the two copackaged RNA genomes. If these two RNA molecules derive from different viral strains, reverse transcription will give rise to highly recombinated proviral DNAs.</text>
</comment>
<comment type="miscellaneous">
    <text>HIV-1 lineages are divided in three main groups, M (for Major), O (for Outlier), and N (for New, or Non-M, Non-O). The vast majority of strains found worldwide belong to the group M. Group O seems to be endemic to and largely confined to Cameroon and neighboring countries in West Central Africa, where these viruses represent a small minority of HIV-1 strains. The group N is represented by a limited number of isolates from Cameroonian persons. The group M is further subdivided in 9 clades or subtypes (A to D, F to H, J and K).</text>
</comment>
<comment type="miscellaneous">
    <text>Resistance to inhibitors associated with mutations are observed both in viral protease and in reverse transcriptase. Most of the time, single mutations confer only a modest reduction in drug susceptibility. Combination of several mutations is usually required to develop a high-level drug resistance. These mutations are predominantly found in clade B viruses and not in other genotypes. They are listed in the clade B representative isolate HXB2 (AC P04585).</text>
</comment>
<comment type="miscellaneous">
    <molecule>Isoform Gag-Pol polyprotein</molecule>
    <text>Produced by -1 ribosomal frameshifting.</text>
</comment>
<comment type="online information" name="HIV drug resistance mutations">
    <link uri="https://www.iasusa.org/hiv-drug-resistance/hiv-drug-resistance-mutations/"/>
</comment>
<comment type="online information" name="hivdb">
    <link uri="https://hivdb.stanford.edu"/>
    <text>HIV drug resistance database</text>
</comment>
<accession>Q9QBY3</accession>
<sequence>MGARASVLSGGKLDAWEKIRLRPGGKKKYKLKHLVWASRELERFALNPGLLETTEGCRQIITQIQPSIQTGSEEIKSLYNTIAVLYFVHQKIEVKDTKEALDKLEEEQNKSQRKTQQEAADKGVSQNYPIVQNLQGQMVHQALSPRTLNAWVKVIEEKAFSPEVIPMFTALSEGATPQDLNTMLNTVGGHQAAMQMLKDTINDEAAEWDRLHPVHAGPIPPGQMREPRGSDIAGTTSTLQEQIAWMTSNPPVPVGEIYKRWIILGLNKIVRMYSPVSILDIRQGPKEPFRDYVDRFFKTLRAEQATQEVKNWMTDTLLVQNANPDCKTILKALGPGASLEEMMTACQGVGGPSHKARILAEAMSQVTNPVVMMQKGNFKGHRKIVKCFNCGKEGHIARNCRAPRKKGCWKCGKEGHQMKDCTERQANFFRENLAFPQGEAREFSSEQTRANSPTSRELRVRGGDNPLSEAGDQRQGTEPSFNFPQITLWQRPIVTIKVGGQLREALLDTGADDTVLEEINLPGKWKPKMIGGIGGFIKVRQYDQVLIEICGQKAIGTVLVGPTPVNIIGRNLLTQIGCTLNFPISPIETVPVKLKPGMDGPKVKQWPLTEEKIKALTEICTEMEKEGKISKIGPENPYNTPVFAIKKKDSTKWRKLVDFRELNKRTQDFWEVQLGIPHPAGLKKKKSVTVLDVGDAYFSVPLDKDFRKYTAFTIPSINNETPGVRYQYNVLPQGWKGSPAIFQHSMTKILEPFRIKNPEMVIYQYMDDLYVGSDLEIGQPRTKIEELREHLLKWGFTTPDKKHQKEPPFLWMGYELHPDKWTVQPIQLPDKDSWTVNDIQKLVGKLNWASQIYPGIKVKQLCKLLRGVKALTDIVPLTAEAELELAENREILKEPVHGVYYDPSKDLIAEIQKQGNDQWTYQIYQEPHKNLKTGKYARMRSAHTNDVKQLTEAVQKIATEGIVIWGKTPKFRLPIQKETWETWWTEYWQATWIPEWEFVNTPPLVKLWYQLETEPIVGAETFYVDGAAHRETKKGRAGYVTDRGRQKVVSITETTNQKAELQAICLALQDSGSEVNIVTDSQYALGIIQAQPDKSESDLVNQIIEQLIKKERIYLSWVPAHKGIGGNEQVDKLVSAGIRKVLFLDGIDKAQEEHEKYHNNWRAMASDFNLPPIVAKEIVASCDKCQLKGEAIHGQVDCSPGIWQLDCTHLEGKIILVAVHVASGYIEAEVIPAETGQETAYFILKLAGRWPVKVIHTDNGTNFTSTVVKAACWWAGVKQEFGIPYNPQSQGVVESMNKELKKIIGQVRDQAEHLKTAVQMAVFIHNFKRKGGIGGYSAGERIVDIIATDIQTKELQKQILNIQKFRVYYRDSREPIWKGPAKLLWKGEGAVVIQDNSEIKVVPRRKAKIIRDYGKQMAGDDCVAGRQDED</sequence>